<accession>Q9FNG8</accession>
<keyword id="KW-0496">Mitochondrion</keyword>
<keyword id="KW-1185">Reference proteome</keyword>
<keyword id="KW-0677">Repeat</keyword>
<keyword id="KW-0809">Transit peptide</keyword>
<name>PP366_ARATH</name>
<organism>
    <name type="scientific">Arabidopsis thaliana</name>
    <name type="common">Mouse-ear cress</name>
    <dbReference type="NCBI Taxonomy" id="3702"/>
    <lineage>
        <taxon>Eukaryota</taxon>
        <taxon>Viridiplantae</taxon>
        <taxon>Streptophyta</taxon>
        <taxon>Embryophyta</taxon>
        <taxon>Tracheophyta</taxon>
        <taxon>Spermatophyta</taxon>
        <taxon>Magnoliopsida</taxon>
        <taxon>eudicotyledons</taxon>
        <taxon>Gunneridae</taxon>
        <taxon>Pentapetalae</taxon>
        <taxon>rosids</taxon>
        <taxon>malvids</taxon>
        <taxon>Brassicales</taxon>
        <taxon>Brassicaceae</taxon>
        <taxon>Camelineae</taxon>
        <taxon>Arabidopsis</taxon>
    </lineage>
</organism>
<protein>
    <recommendedName>
        <fullName>Putative pentatricopeptide repeat-containing protein At5g06400, mitochondrial</fullName>
    </recommendedName>
</protein>
<feature type="transit peptide" description="Mitochondrion" evidence="1">
    <location>
        <begin position="1"/>
        <end position="77"/>
    </location>
</feature>
<feature type="chain" id="PRO_0000363503" description="Putative pentatricopeptide repeat-containing protein At5g06400, mitochondrial">
    <location>
        <begin position="78"/>
        <end position="1030"/>
    </location>
</feature>
<feature type="repeat" description="PPR 1">
    <location>
        <begin position="188"/>
        <end position="222"/>
    </location>
</feature>
<feature type="repeat" description="PPR 2">
    <location>
        <begin position="223"/>
        <end position="257"/>
    </location>
</feature>
<feature type="repeat" description="PPR 3">
    <location>
        <begin position="258"/>
        <end position="292"/>
    </location>
</feature>
<feature type="repeat" description="PPR 4">
    <location>
        <begin position="293"/>
        <end position="323"/>
    </location>
</feature>
<feature type="repeat" description="PPR 5">
    <location>
        <begin position="328"/>
        <end position="362"/>
    </location>
</feature>
<feature type="repeat" description="PPR 6">
    <location>
        <begin position="363"/>
        <end position="393"/>
    </location>
</feature>
<feature type="repeat" description="PPR 7">
    <location>
        <begin position="397"/>
        <end position="431"/>
    </location>
</feature>
<feature type="repeat" description="PPR 8">
    <location>
        <begin position="432"/>
        <end position="466"/>
    </location>
</feature>
<feature type="repeat" description="PPR 9">
    <location>
        <begin position="467"/>
        <end position="501"/>
    </location>
</feature>
<feature type="repeat" description="PPR 10">
    <location>
        <begin position="502"/>
        <end position="536"/>
    </location>
</feature>
<feature type="repeat" description="PPR 11">
    <location>
        <begin position="677"/>
        <end position="711"/>
    </location>
</feature>
<feature type="repeat" description="PPR 12">
    <location>
        <begin position="712"/>
        <end position="746"/>
    </location>
</feature>
<feature type="repeat" description="PPR 13">
    <location>
        <begin position="747"/>
        <end position="783"/>
    </location>
</feature>
<feature type="repeat" description="PPR 14">
    <location>
        <begin position="784"/>
        <end position="814"/>
    </location>
</feature>
<feature type="repeat" description="PPR 15">
    <location>
        <begin position="818"/>
        <end position="852"/>
    </location>
</feature>
<feature type="repeat" description="PPR 16">
    <location>
        <begin position="853"/>
        <end position="887"/>
    </location>
</feature>
<feature type="repeat" description="PPR 17">
    <location>
        <begin position="888"/>
        <end position="922"/>
    </location>
</feature>
<feature type="repeat" description="PPR 18">
    <location>
        <begin position="923"/>
        <end position="957"/>
    </location>
</feature>
<feature type="repeat" description="PPR 19">
    <location>
        <begin position="958"/>
        <end position="992"/>
    </location>
</feature>
<reference key="1">
    <citation type="journal article" date="1997" name="DNA Res.">
        <title>Structural analysis of Arabidopsis thaliana chromosome 5. II. Sequence features of the regions of 1,044,062 bp covered by thirteen physically assigned P1 clones.</title>
        <authorList>
            <person name="Kotani H."/>
            <person name="Nakamura Y."/>
            <person name="Sato S."/>
            <person name="Kaneko T."/>
            <person name="Asamizu E."/>
            <person name="Miyajima N."/>
            <person name="Tabata S."/>
        </authorList>
    </citation>
    <scope>NUCLEOTIDE SEQUENCE [LARGE SCALE GENOMIC DNA]</scope>
    <source>
        <strain>cv. Columbia</strain>
    </source>
</reference>
<reference key="2">
    <citation type="journal article" date="2017" name="Plant J.">
        <title>Araport11: a complete reannotation of the Arabidopsis thaliana reference genome.</title>
        <authorList>
            <person name="Cheng C.Y."/>
            <person name="Krishnakumar V."/>
            <person name="Chan A.P."/>
            <person name="Thibaud-Nissen F."/>
            <person name="Schobel S."/>
            <person name="Town C.D."/>
        </authorList>
    </citation>
    <scope>GENOME REANNOTATION</scope>
    <source>
        <strain>cv. Columbia</strain>
    </source>
</reference>
<reference key="3">
    <citation type="journal article" date="2004" name="Plant Cell">
        <title>Genome-wide analysis of Arabidopsis pentatricopeptide repeat proteins reveals their essential role in organelle biogenesis.</title>
        <authorList>
            <person name="Lurin C."/>
            <person name="Andres C."/>
            <person name="Aubourg S."/>
            <person name="Bellaoui M."/>
            <person name="Bitton F."/>
            <person name="Bruyere C."/>
            <person name="Caboche M."/>
            <person name="Debast C."/>
            <person name="Gualberto J."/>
            <person name="Hoffmann B."/>
            <person name="Lecharny A."/>
            <person name="Le Ret M."/>
            <person name="Martin-Magniette M.-L."/>
            <person name="Mireau H."/>
            <person name="Peeters N."/>
            <person name="Renou J.-P."/>
            <person name="Szurek B."/>
            <person name="Taconnat L."/>
            <person name="Small I."/>
        </authorList>
    </citation>
    <scope>GENE FAMILY</scope>
</reference>
<proteinExistence type="inferred from homology"/>
<sequence>MKALFRFKSCLFDPTRRRNQLVSFSGFSKSSKSNKTRETTTTSKIQAEATAITSLFNEITEILGTDVVKLDETTRLRSHVSGAVSDNGVSVSCTEGVRQNAAMGFSGEDEKAQKVLHEEVDFSPVVHEITSVVRGDDVLVSMEDRLEKLSFRFEPEIVENVLKRCFKVPHLAMRFFNWVKQKDGFSHRVGIYNTMLSIAGEARNLDMVDELVSEMEKNGCDKDIRTWTILISVYGKAKKIGKGLLVFEKMRKSGFELDATAYNIMIRSLCIAGRGDLALEFYKEMMEKGITFGLRTYKMLLDCIAKSEKVDVVQSIADDMVRICEISEHDAFGYLLKSFCVSGKIKEALELIRELKNKEMCLDAKYFEILVKGLCRANRMVDALEIVDIMKRRKLDDSNVYGIIISGYLRQNDVSKALEQFEVIKKSGRPPRVSTYTEIMQHLFKLKQFEKGCNLFNEMIENGIEPDSVAITAVVAGHLGQNRVAEAWKVFSSMEEKGIKPTWKSYSIFVKELCRSSRYDEIIKIFNQMHASKIVIRDDIFSWVISSMEKNGEKEKIHLIKEIQKRSNSYCDELNGSGKAEFSQEEELVDDYNCPQLVQQSALPPALSAVDKMDVQEICRVLSSSRDWERTQEALEKSTVQFTPELVVEVLRHAKIQGNAVLRFFSWVGKRNGYKHNSEAYNMSIKVAGCGKDFKQMRSLFYEMRRQGCLITQDTWAIMIMQYGRTGLTNIAIRTFKEMKDMGLIPSSSTFKCLITVLCEKKGRNVEEATRTFREMIRSGFVPDRELVQDYLGCLCEVGNTKDAKSCLDSLGKIGFPVTVAYSIYIRALCRIGKLEEALSELASFEGERSLLDQYTYGSIVHGLLQRGDLQKALDKVNSMKEIGTKPGVHVYTSLIVYFFKEKQLEKVLETCQKMEGESCEPSVVTYTAMICGYMSLGKVEEAWNAFRNMEERGTSPDFKTYSKFINCLCQACKSEDALKLLSEMLDKGIAPSTINFRTVFYGLNREGKHDLARIALQKKSALVAQRTVS</sequence>
<dbReference type="EMBL" id="AB006700">
    <property type="protein sequence ID" value="BAB08962.1"/>
    <property type="molecule type" value="Genomic_DNA"/>
</dbReference>
<dbReference type="EMBL" id="CP002688">
    <property type="protein sequence ID" value="AED91010.1"/>
    <property type="molecule type" value="Genomic_DNA"/>
</dbReference>
<dbReference type="RefSeq" id="NP_196258.1">
    <property type="nucleotide sequence ID" value="NM_120723.2"/>
</dbReference>
<dbReference type="SMR" id="Q9FNG8"/>
<dbReference type="FunCoup" id="Q9FNG8">
    <property type="interactions" value="335"/>
</dbReference>
<dbReference type="STRING" id="3702.Q9FNG8"/>
<dbReference type="PaxDb" id="3702-AT5G06400.1"/>
<dbReference type="ProteomicsDB" id="249256"/>
<dbReference type="EnsemblPlants" id="AT5G06400.1">
    <property type="protein sequence ID" value="AT5G06400.1"/>
    <property type="gene ID" value="AT5G06400"/>
</dbReference>
<dbReference type="GeneID" id="830528"/>
<dbReference type="Gramene" id="AT5G06400.1">
    <property type="protein sequence ID" value="AT5G06400.1"/>
    <property type="gene ID" value="AT5G06400"/>
</dbReference>
<dbReference type="KEGG" id="ath:AT5G06400"/>
<dbReference type="Araport" id="AT5G06400"/>
<dbReference type="TAIR" id="AT5G06400"/>
<dbReference type="eggNOG" id="KOG4197">
    <property type="taxonomic scope" value="Eukaryota"/>
</dbReference>
<dbReference type="HOGENOM" id="CLU_002706_49_12_1"/>
<dbReference type="InParanoid" id="Q9FNG8"/>
<dbReference type="OMA" id="ETYSMFM"/>
<dbReference type="PhylomeDB" id="Q9FNG8"/>
<dbReference type="PRO" id="PR:Q9FNG8"/>
<dbReference type="Proteomes" id="UP000006548">
    <property type="component" value="Chromosome 5"/>
</dbReference>
<dbReference type="ExpressionAtlas" id="Q9FNG8">
    <property type="expression patterns" value="baseline and differential"/>
</dbReference>
<dbReference type="GO" id="GO:0005739">
    <property type="term" value="C:mitochondrion"/>
    <property type="evidence" value="ECO:0007669"/>
    <property type="project" value="UniProtKB-SubCell"/>
</dbReference>
<dbReference type="Gene3D" id="1.25.40.10">
    <property type="entry name" value="Tetratricopeptide repeat domain"/>
    <property type="match status" value="6"/>
</dbReference>
<dbReference type="InterPro" id="IPR051114">
    <property type="entry name" value="Mito_RNA_Proc_CCM1"/>
</dbReference>
<dbReference type="InterPro" id="IPR002885">
    <property type="entry name" value="Pentatricopeptide_rpt"/>
</dbReference>
<dbReference type="InterPro" id="IPR011990">
    <property type="entry name" value="TPR-like_helical_dom_sf"/>
</dbReference>
<dbReference type="NCBIfam" id="TIGR00756">
    <property type="entry name" value="PPR"/>
    <property type="match status" value="12"/>
</dbReference>
<dbReference type="PANTHER" id="PTHR47934:SF6">
    <property type="entry name" value="MITOCHONDRIAL GROUP I INTRON SPLICING FACTOR CCM1-RELATED"/>
    <property type="match status" value="1"/>
</dbReference>
<dbReference type="PANTHER" id="PTHR47934">
    <property type="entry name" value="PENTATRICOPEPTIDE REPEAT-CONTAINING PROTEIN PET309, MITOCHONDRIAL"/>
    <property type="match status" value="1"/>
</dbReference>
<dbReference type="Pfam" id="PF01535">
    <property type="entry name" value="PPR"/>
    <property type="match status" value="7"/>
</dbReference>
<dbReference type="Pfam" id="PF13041">
    <property type="entry name" value="PPR_2"/>
    <property type="match status" value="4"/>
</dbReference>
<dbReference type="Pfam" id="PF13812">
    <property type="entry name" value="PPR_3"/>
    <property type="match status" value="1"/>
</dbReference>
<dbReference type="PROSITE" id="PS51375">
    <property type="entry name" value="PPR"/>
    <property type="match status" value="18"/>
</dbReference>
<evidence type="ECO:0000255" key="1"/>
<evidence type="ECO:0000305" key="2"/>
<gene>
    <name type="ordered locus">At5g06400</name>
    <name type="ORF">MHF15.8</name>
</gene>
<comment type="subcellular location">
    <subcellularLocation>
        <location evidence="2">Mitochondrion</location>
    </subcellularLocation>
</comment>
<comment type="similarity">
    <text evidence="2">Belongs to the PPR family. P subfamily.</text>
</comment>
<comment type="online information" name="Pentatricopeptide repeat proteins">
    <link uri="https://ppr.plantenergy.uwa.edu.au"/>
</comment>